<dbReference type="EMBL" id="CP000114">
    <property type="protein sequence ID" value="ABA45388.1"/>
    <property type="molecule type" value="Genomic_DNA"/>
</dbReference>
<dbReference type="RefSeq" id="WP_000529929.1">
    <property type="nucleotide sequence ID" value="NC_007432.1"/>
</dbReference>
<dbReference type="SMR" id="Q3K3W3"/>
<dbReference type="GeneID" id="69900032"/>
<dbReference type="KEGG" id="sak:SAK_0097"/>
<dbReference type="HOGENOM" id="CLU_058591_0_2_9"/>
<dbReference type="GO" id="GO:0022627">
    <property type="term" value="C:cytosolic small ribosomal subunit"/>
    <property type="evidence" value="ECO:0007669"/>
    <property type="project" value="TreeGrafter"/>
</dbReference>
<dbReference type="GO" id="GO:0003729">
    <property type="term" value="F:mRNA binding"/>
    <property type="evidence" value="ECO:0007669"/>
    <property type="project" value="UniProtKB-UniRule"/>
</dbReference>
<dbReference type="GO" id="GO:0019843">
    <property type="term" value="F:rRNA binding"/>
    <property type="evidence" value="ECO:0007669"/>
    <property type="project" value="UniProtKB-UniRule"/>
</dbReference>
<dbReference type="GO" id="GO:0003735">
    <property type="term" value="F:structural constituent of ribosome"/>
    <property type="evidence" value="ECO:0007669"/>
    <property type="project" value="InterPro"/>
</dbReference>
<dbReference type="GO" id="GO:0006412">
    <property type="term" value="P:translation"/>
    <property type="evidence" value="ECO:0007669"/>
    <property type="project" value="UniProtKB-UniRule"/>
</dbReference>
<dbReference type="CDD" id="cd02412">
    <property type="entry name" value="KH-II_30S_S3"/>
    <property type="match status" value="1"/>
</dbReference>
<dbReference type="FunFam" id="3.30.1140.32:FF:000001">
    <property type="entry name" value="30S ribosomal protein S3"/>
    <property type="match status" value="1"/>
</dbReference>
<dbReference type="FunFam" id="3.30.300.20:FF:000001">
    <property type="entry name" value="30S ribosomal protein S3"/>
    <property type="match status" value="1"/>
</dbReference>
<dbReference type="Gene3D" id="3.30.300.20">
    <property type="match status" value="1"/>
</dbReference>
<dbReference type="Gene3D" id="3.30.1140.32">
    <property type="entry name" value="Ribosomal protein S3, C-terminal domain"/>
    <property type="match status" value="1"/>
</dbReference>
<dbReference type="HAMAP" id="MF_01309_B">
    <property type="entry name" value="Ribosomal_uS3_B"/>
    <property type="match status" value="1"/>
</dbReference>
<dbReference type="InterPro" id="IPR004087">
    <property type="entry name" value="KH_dom"/>
</dbReference>
<dbReference type="InterPro" id="IPR015946">
    <property type="entry name" value="KH_dom-like_a/b"/>
</dbReference>
<dbReference type="InterPro" id="IPR004044">
    <property type="entry name" value="KH_dom_type_2"/>
</dbReference>
<dbReference type="InterPro" id="IPR009019">
    <property type="entry name" value="KH_sf_prok-type"/>
</dbReference>
<dbReference type="InterPro" id="IPR036419">
    <property type="entry name" value="Ribosomal_S3_C_sf"/>
</dbReference>
<dbReference type="InterPro" id="IPR005704">
    <property type="entry name" value="Ribosomal_uS3_bac-typ"/>
</dbReference>
<dbReference type="InterPro" id="IPR001351">
    <property type="entry name" value="Ribosomal_uS3_C"/>
</dbReference>
<dbReference type="InterPro" id="IPR018280">
    <property type="entry name" value="Ribosomal_uS3_CS"/>
</dbReference>
<dbReference type="NCBIfam" id="TIGR01009">
    <property type="entry name" value="rpsC_bact"/>
    <property type="match status" value="1"/>
</dbReference>
<dbReference type="PANTHER" id="PTHR11760">
    <property type="entry name" value="30S/40S RIBOSOMAL PROTEIN S3"/>
    <property type="match status" value="1"/>
</dbReference>
<dbReference type="PANTHER" id="PTHR11760:SF19">
    <property type="entry name" value="SMALL RIBOSOMAL SUBUNIT PROTEIN US3C"/>
    <property type="match status" value="1"/>
</dbReference>
<dbReference type="Pfam" id="PF07650">
    <property type="entry name" value="KH_2"/>
    <property type="match status" value="1"/>
</dbReference>
<dbReference type="Pfam" id="PF00189">
    <property type="entry name" value="Ribosomal_S3_C"/>
    <property type="match status" value="1"/>
</dbReference>
<dbReference type="SMART" id="SM00322">
    <property type="entry name" value="KH"/>
    <property type="match status" value="1"/>
</dbReference>
<dbReference type="SUPFAM" id="SSF54814">
    <property type="entry name" value="Prokaryotic type KH domain (KH-domain type II)"/>
    <property type="match status" value="1"/>
</dbReference>
<dbReference type="SUPFAM" id="SSF54821">
    <property type="entry name" value="Ribosomal protein S3 C-terminal domain"/>
    <property type="match status" value="1"/>
</dbReference>
<dbReference type="PROSITE" id="PS50823">
    <property type="entry name" value="KH_TYPE_2"/>
    <property type="match status" value="1"/>
</dbReference>
<dbReference type="PROSITE" id="PS00548">
    <property type="entry name" value="RIBOSOMAL_S3"/>
    <property type="match status" value="1"/>
</dbReference>
<feature type="chain" id="PRO_0000230732" description="Small ribosomal subunit protein uS3">
    <location>
        <begin position="1"/>
        <end position="217"/>
    </location>
</feature>
<feature type="domain" description="KH type-2" evidence="1">
    <location>
        <begin position="38"/>
        <end position="106"/>
    </location>
</feature>
<name>RS3_STRA1</name>
<proteinExistence type="inferred from homology"/>
<gene>
    <name evidence="1" type="primary">rpsC</name>
    <name type="ordered locus">SAK_0097</name>
</gene>
<protein>
    <recommendedName>
        <fullName evidence="1">Small ribosomal subunit protein uS3</fullName>
    </recommendedName>
    <alternativeName>
        <fullName evidence="2">30S ribosomal protein S3</fullName>
    </alternativeName>
</protein>
<evidence type="ECO:0000255" key="1">
    <source>
        <dbReference type="HAMAP-Rule" id="MF_01309"/>
    </source>
</evidence>
<evidence type="ECO:0000305" key="2"/>
<organism>
    <name type="scientific">Streptococcus agalactiae serotype Ia (strain ATCC 27591 / A909 / CDC SS700)</name>
    <dbReference type="NCBI Taxonomy" id="205921"/>
    <lineage>
        <taxon>Bacteria</taxon>
        <taxon>Bacillati</taxon>
        <taxon>Bacillota</taxon>
        <taxon>Bacilli</taxon>
        <taxon>Lactobacillales</taxon>
        <taxon>Streptococcaceae</taxon>
        <taxon>Streptococcus</taxon>
    </lineage>
</organism>
<accession>Q3K3W3</accession>
<keyword id="KW-0687">Ribonucleoprotein</keyword>
<keyword id="KW-0689">Ribosomal protein</keyword>
<keyword id="KW-0694">RNA-binding</keyword>
<keyword id="KW-0699">rRNA-binding</keyword>
<comment type="function">
    <text evidence="1">Binds the lower part of the 30S subunit head. Binds mRNA in the 70S ribosome, positioning it for translation.</text>
</comment>
<comment type="subunit">
    <text evidence="1">Part of the 30S ribosomal subunit. Forms a tight complex with proteins S10 and S14.</text>
</comment>
<comment type="similarity">
    <text evidence="1">Belongs to the universal ribosomal protein uS3 family.</text>
</comment>
<sequence>MGQKVHPIGMRVGIIRDWDAKWYAEKEYADYLHEDLAIRKFINKELADASVSTIEIERAVNKVIVSLHTAKPGMVIGKGGANVDALRGQLNKLTGKQVHINIIEIKQPDLDAHLVGENIARQLEQRVAFRRAQKQAIQRTMRAGAKGIKTQVSGRLNGADIARAEGYSEGTVPLHTLRADIDYAWEEADTTYGKLGVKVWIYRGEVLPARKNTKGGK</sequence>
<reference key="1">
    <citation type="journal article" date="2005" name="Proc. Natl. Acad. Sci. U.S.A.">
        <title>Genome analysis of multiple pathogenic isolates of Streptococcus agalactiae: implications for the microbial 'pan-genome'.</title>
        <authorList>
            <person name="Tettelin H."/>
            <person name="Masignani V."/>
            <person name="Cieslewicz M.J."/>
            <person name="Donati C."/>
            <person name="Medini D."/>
            <person name="Ward N.L."/>
            <person name="Angiuoli S.V."/>
            <person name="Crabtree J."/>
            <person name="Jones A.L."/>
            <person name="Durkin A.S."/>
            <person name="DeBoy R.T."/>
            <person name="Davidsen T.M."/>
            <person name="Mora M."/>
            <person name="Scarselli M."/>
            <person name="Margarit y Ros I."/>
            <person name="Peterson J.D."/>
            <person name="Hauser C.R."/>
            <person name="Sundaram J.P."/>
            <person name="Nelson W.C."/>
            <person name="Madupu R."/>
            <person name="Brinkac L.M."/>
            <person name="Dodson R.J."/>
            <person name="Rosovitz M.J."/>
            <person name="Sullivan S.A."/>
            <person name="Daugherty S.C."/>
            <person name="Haft D.H."/>
            <person name="Selengut J."/>
            <person name="Gwinn M.L."/>
            <person name="Zhou L."/>
            <person name="Zafar N."/>
            <person name="Khouri H."/>
            <person name="Radune D."/>
            <person name="Dimitrov G."/>
            <person name="Watkins K."/>
            <person name="O'Connor K.J."/>
            <person name="Smith S."/>
            <person name="Utterback T.R."/>
            <person name="White O."/>
            <person name="Rubens C.E."/>
            <person name="Grandi G."/>
            <person name="Madoff L.C."/>
            <person name="Kasper D.L."/>
            <person name="Telford J.L."/>
            <person name="Wessels M.R."/>
            <person name="Rappuoli R."/>
            <person name="Fraser C.M."/>
        </authorList>
    </citation>
    <scope>NUCLEOTIDE SEQUENCE [LARGE SCALE GENOMIC DNA]</scope>
    <source>
        <strain>ATCC 27591 / A909 / CDC SS700</strain>
    </source>
</reference>